<name>LIPA_SALTI</name>
<dbReference type="EC" id="2.8.1.8" evidence="1"/>
<dbReference type="EMBL" id="AL513382">
    <property type="protein sequence ID" value="CAD05110.1"/>
    <property type="molecule type" value="Genomic_DNA"/>
</dbReference>
<dbReference type="EMBL" id="AE014613">
    <property type="protein sequence ID" value="AAO69837.1"/>
    <property type="molecule type" value="Genomic_DNA"/>
</dbReference>
<dbReference type="RefSeq" id="NP_455209.1">
    <property type="nucleotide sequence ID" value="NC_003198.1"/>
</dbReference>
<dbReference type="SMR" id="Q8Z8I3"/>
<dbReference type="STRING" id="220341.gene:17584691"/>
<dbReference type="KEGG" id="stt:t2234"/>
<dbReference type="KEGG" id="sty:STY0683"/>
<dbReference type="PATRIC" id="fig|220341.7.peg.686"/>
<dbReference type="eggNOG" id="COG0320">
    <property type="taxonomic scope" value="Bacteria"/>
</dbReference>
<dbReference type="HOGENOM" id="CLU_033144_2_1_6"/>
<dbReference type="OMA" id="PYCDIDF"/>
<dbReference type="UniPathway" id="UPA00538">
    <property type="reaction ID" value="UER00593"/>
</dbReference>
<dbReference type="Proteomes" id="UP000000541">
    <property type="component" value="Chromosome"/>
</dbReference>
<dbReference type="Proteomes" id="UP000002670">
    <property type="component" value="Chromosome"/>
</dbReference>
<dbReference type="GO" id="GO:0005737">
    <property type="term" value="C:cytoplasm"/>
    <property type="evidence" value="ECO:0007669"/>
    <property type="project" value="UniProtKB-SubCell"/>
</dbReference>
<dbReference type="GO" id="GO:0051539">
    <property type="term" value="F:4 iron, 4 sulfur cluster binding"/>
    <property type="evidence" value="ECO:0007669"/>
    <property type="project" value="UniProtKB-UniRule"/>
</dbReference>
<dbReference type="GO" id="GO:0016992">
    <property type="term" value="F:lipoate synthase activity"/>
    <property type="evidence" value="ECO:0007669"/>
    <property type="project" value="UniProtKB-UniRule"/>
</dbReference>
<dbReference type="GO" id="GO:0046872">
    <property type="term" value="F:metal ion binding"/>
    <property type="evidence" value="ECO:0007669"/>
    <property type="project" value="UniProtKB-KW"/>
</dbReference>
<dbReference type="CDD" id="cd01335">
    <property type="entry name" value="Radical_SAM"/>
    <property type="match status" value="1"/>
</dbReference>
<dbReference type="FunFam" id="3.20.20.70:FF:000023">
    <property type="entry name" value="Lipoyl synthase"/>
    <property type="match status" value="1"/>
</dbReference>
<dbReference type="Gene3D" id="3.20.20.70">
    <property type="entry name" value="Aldolase class I"/>
    <property type="match status" value="1"/>
</dbReference>
<dbReference type="HAMAP" id="MF_00206">
    <property type="entry name" value="Lipoyl_synth"/>
    <property type="match status" value="1"/>
</dbReference>
<dbReference type="InterPro" id="IPR013785">
    <property type="entry name" value="Aldolase_TIM"/>
</dbReference>
<dbReference type="InterPro" id="IPR006638">
    <property type="entry name" value="Elp3/MiaA/NifB-like_rSAM"/>
</dbReference>
<dbReference type="InterPro" id="IPR031691">
    <property type="entry name" value="LIAS_N"/>
</dbReference>
<dbReference type="InterPro" id="IPR003698">
    <property type="entry name" value="Lipoyl_synth"/>
</dbReference>
<dbReference type="InterPro" id="IPR007197">
    <property type="entry name" value="rSAM"/>
</dbReference>
<dbReference type="NCBIfam" id="TIGR00510">
    <property type="entry name" value="lipA"/>
    <property type="match status" value="1"/>
</dbReference>
<dbReference type="NCBIfam" id="NF004019">
    <property type="entry name" value="PRK05481.1"/>
    <property type="match status" value="1"/>
</dbReference>
<dbReference type="NCBIfam" id="NF009544">
    <property type="entry name" value="PRK12928.1"/>
    <property type="match status" value="1"/>
</dbReference>
<dbReference type="PANTHER" id="PTHR10949">
    <property type="entry name" value="LIPOYL SYNTHASE"/>
    <property type="match status" value="1"/>
</dbReference>
<dbReference type="PANTHER" id="PTHR10949:SF0">
    <property type="entry name" value="LIPOYL SYNTHASE, MITOCHONDRIAL"/>
    <property type="match status" value="1"/>
</dbReference>
<dbReference type="Pfam" id="PF16881">
    <property type="entry name" value="LIAS_N"/>
    <property type="match status" value="1"/>
</dbReference>
<dbReference type="Pfam" id="PF04055">
    <property type="entry name" value="Radical_SAM"/>
    <property type="match status" value="1"/>
</dbReference>
<dbReference type="PIRSF" id="PIRSF005963">
    <property type="entry name" value="Lipoyl_synth"/>
    <property type="match status" value="1"/>
</dbReference>
<dbReference type="SFLD" id="SFLDF00271">
    <property type="entry name" value="lipoyl_synthase"/>
    <property type="match status" value="1"/>
</dbReference>
<dbReference type="SFLD" id="SFLDG01058">
    <property type="entry name" value="lipoyl_synthase_like"/>
    <property type="match status" value="1"/>
</dbReference>
<dbReference type="SMART" id="SM00729">
    <property type="entry name" value="Elp3"/>
    <property type="match status" value="1"/>
</dbReference>
<dbReference type="SUPFAM" id="SSF102114">
    <property type="entry name" value="Radical SAM enzymes"/>
    <property type="match status" value="1"/>
</dbReference>
<dbReference type="PROSITE" id="PS51918">
    <property type="entry name" value="RADICAL_SAM"/>
    <property type="match status" value="1"/>
</dbReference>
<evidence type="ECO:0000255" key="1">
    <source>
        <dbReference type="HAMAP-Rule" id="MF_00206"/>
    </source>
</evidence>
<evidence type="ECO:0000255" key="2">
    <source>
        <dbReference type="PROSITE-ProRule" id="PRU01266"/>
    </source>
</evidence>
<evidence type="ECO:0000305" key="3"/>
<gene>
    <name evidence="1" type="primary">lipA</name>
    <name type="ordered locus">STY0683</name>
    <name type="ordered locus">t2234</name>
</gene>
<protein>
    <recommendedName>
        <fullName evidence="1">Lipoyl synthase</fullName>
        <ecNumber evidence="1">2.8.1.8</ecNumber>
    </recommendedName>
    <alternativeName>
        <fullName evidence="1">Lip-syn</fullName>
        <shortName evidence="1">LS</shortName>
    </alternativeName>
    <alternativeName>
        <fullName evidence="1">Lipoate synthase</fullName>
    </alternativeName>
    <alternativeName>
        <fullName evidence="1">Lipoic acid synthase</fullName>
    </alternativeName>
    <alternativeName>
        <fullName evidence="1">Sulfur insertion protein LipA</fullName>
    </alternativeName>
</protein>
<sequence length="321" mass="35998">MSKPIVMERGVKYRDADKMALIPVKNVVTERDALLRKPEWMKIKLPADSTRIQGIKAAMRKNGLHSVCEEASCPNLAECFNHGTATFMILGAICTRRCPFCDVAHGRPVAPDAEEPQKLAQTIADMALRYVVITSVDRDDLRDGGAQHFADCITAIRAKSPEIKIETLVPDFRGRMDRALDILNATPPDVFNHNLENVPRIYRQVRPGADYNWSLKLLERFKEAHPEIPTKSGLMVGLGETNAEIIEVMRDLRRHGVTMLTLGQYLQPSRHHLPVQRYVSPEEFDEMKAEALAMGFTHAACGPCVRSSYHADLQAKGMEVK</sequence>
<reference key="1">
    <citation type="journal article" date="2001" name="Nature">
        <title>Complete genome sequence of a multiple drug resistant Salmonella enterica serovar Typhi CT18.</title>
        <authorList>
            <person name="Parkhill J."/>
            <person name="Dougan G."/>
            <person name="James K.D."/>
            <person name="Thomson N.R."/>
            <person name="Pickard D."/>
            <person name="Wain J."/>
            <person name="Churcher C.M."/>
            <person name="Mungall K.L."/>
            <person name="Bentley S.D."/>
            <person name="Holden M.T.G."/>
            <person name="Sebaihia M."/>
            <person name="Baker S."/>
            <person name="Basham D."/>
            <person name="Brooks K."/>
            <person name="Chillingworth T."/>
            <person name="Connerton P."/>
            <person name="Cronin A."/>
            <person name="Davis P."/>
            <person name="Davies R.M."/>
            <person name="Dowd L."/>
            <person name="White N."/>
            <person name="Farrar J."/>
            <person name="Feltwell T."/>
            <person name="Hamlin N."/>
            <person name="Haque A."/>
            <person name="Hien T.T."/>
            <person name="Holroyd S."/>
            <person name="Jagels K."/>
            <person name="Krogh A."/>
            <person name="Larsen T.S."/>
            <person name="Leather S."/>
            <person name="Moule S."/>
            <person name="O'Gaora P."/>
            <person name="Parry C."/>
            <person name="Quail M.A."/>
            <person name="Rutherford K.M."/>
            <person name="Simmonds M."/>
            <person name="Skelton J."/>
            <person name="Stevens K."/>
            <person name="Whitehead S."/>
            <person name="Barrell B.G."/>
        </authorList>
    </citation>
    <scope>NUCLEOTIDE SEQUENCE [LARGE SCALE GENOMIC DNA]</scope>
    <source>
        <strain>CT18</strain>
    </source>
</reference>
<reference key="2">
    <citation type="journal article" date="2003" name="J. Bacteriol.">
        <title>Comparative genomics of Salmonella enterica serovar Typhi strains Ty2 and CT18.</title>
        <authorList>
            <person name="Deng W."/>
            <person name="Liou S.-R."/>
            <person name="Plunkett G. III"/>
            <person name="Mayhew G.F."/>
            <person name="Rose D.J."/>
            <person name="Burland V."/>
            <person name="Kodoyianni V."/>
            <person name="Schwartz D.C."/>
            <person name="Blattner F.R."/>
        </authorList>
    </citation>
    <scope>NUCLEOTIDE SEQUENCE [LARGE SCALE GENOMIC DNA]</scope>
    <source>
        <strain>ATCC 700931 / Ty2</strain>
    </source>
</reference>
<comment type="function">
    <text evidence="1">Catalyzes the radical-mediated insertion of two sulfur atoms into the C-6 and C-8 positions of the octanoyl moiety bound to the lipoyl domains of lipoate-dependent enzymes, thereby converting the octanoylated domains into lipoylated derivatives.</text>
</comment>
<comment type="catalytic activity">
    <reaction evidence="1">
        <text>[[Fe-S] cluster scaffold protein carrying a second [4Fe-4S](2+) cluster] + N(6)-octanoyl-L-lysyl-[protein] + 2 oxidized [2Fe-2S]-[ferredoxin] + 2 S-adenosyl-L-methionine + 4 H(+) = [[Fe-S] cluster scaffold protein] + N(6)-[(R)-dihydrolipoyl]-L-lysyl-[protein] + 4 Fe(3+) + 2 hydrogen sulfide + 2 5'-deoxyadenosine + 2 L-methionine + 2 reduced [2Fe-2S]-[ferredoxin]</text>
        <dbReference type="Rhea" id="RHEA:16585"/>
        <dbReference type="Rhea" id="RHEA-COMP:9928"/>
        <dbReference type="Rhea" id="RHEA-COMP:10000"/>
        <dbReference type="Rhea" id="RHEA-COMP:10001"/>
        <dbReference type="Rhea" id="RHEA-COMP:10475"/>
        <dbReference type="Rhea" id="RHEA-COMP:14568"/>
        <dbReference type="Rhea" id="RHEA-COMP:14569"/>
        <dbReference type="ChEBI" id="CHEBI:15378"/>
        <dbReference type="ChEBI" id="CHEBI:17319"/>
        <dbReference type="ChEBI" id="CHEBI:29034"/>
        <dbReference type="ChEBI" id="CHEBI:29919"/>
        <dbReference type="ChEBI" id="CHEBI:33722"/>
        <dbReference type="ChEBI" id="CHEBI:33737"/>
        <dbReference type="ChEBI" id="CHEBI:33738"/>
        <dbReference type="ChEBI" id="CHEBI:57844"/>
        <dbReference type="ChEBI" id="CHEBI:59789"/>
        <dbReference type="ChEBI" id="CHEBI:78809"/>
        <dbReference type="ChEBI" id="CHEBI:83100"/>
        <dbReference type="EC" id="2.8.1.8"/>
    </reaction>
</comment>
<comment type="cofactor">
    <cofactor evidence="1">
        <name>[4Fe-4S] cluster</name>
        <dbReference type="ChEBI" id="CHEBI:49883"/>
    </cofactor>
    <text evidence="1">Binds 2 [4Fe-4S] clusters per subunit. One cluster is coordinated with 3 cysteines and an exchangeable S-adenosyl-L-methionine.</text>
</comment>
<comment type="pathway">
    <text evidence="1">Protein modification; protein lipoylation via endogenous pathway; protein N(6)-(lipoyl)lysine from octanoyl-[acyl-carrier-protein]: step 2/2.</text>
</comment>
<comment type="subcellular location">
    <subcellularLocation>
        <location evidence="1">Cytoplasm</location>
    </subcellularLocation>
</comment>
<comment type="similarity">
    <text evidence="1">Belongs to the radical SAM superfamily. Lipoyl synthase family.</text>
</comment>
<keyword id="KW-0004">4Fe-4S</keyword>
<keyword id="KW-0963">Cytoplasm</keyword>
<keyword id="KW-0408">Iron</keyword>
<keyword id="KW-0411">Iron-sulfur</keyword>
<keyword id="KW-0479">Metal-binding</keyword>
<keyword id="KW-0949">S-adenosyl-L-methionine</keyword>
<keyword id="KW-0808">Transferase</keyword>
<feature type="chain" id="PRO_0000102353" description="Lipoyl synthase">
    <location>
        <begin position="1"/>
        <end position="321"/>
    </location>
</feature>
<feature type="domain" description="Radical SAM core" evidence="2">
    <location>
        <begin position="80"/>
        <end position="297"/>
    </location>
</feature>
<feature type="binding site" evidence="1">
    <location>
        <position position="68"/>
    </location>
    <ligand>
        <name>[4Fe-4S] cluster</name>
        <dbReference type="ChEBI" id="CHEBI:49883"/>
        <label>1</label>
    </ligand>
</feature>
<feature type="binding site" evidence="1">
    <location>
        <position position="73"/>
    </location>
    <ligand>
        <name>[4Fe-4S] cluster</name>
        <dbReference type="ChEBI" id="CHEBI:49883"/>
        <label>1</label>
    </ligand>
</feature>
<feature type="binding site" evidence="1">
    <location>
        <position position="79"/>
    </location>
    <ligand>
        <name>[4Fe-4S] cluster</name>
        <dbReference type="ChEBI" id="CHEBI:49883"/>
        <label>1</label>
    </ligand>
</feature>
<feature type="binding site" evidence="1">
    <location>
        <position position="94"/>
    </location>
    <ligand>
        <name>[4Fe-4S] cluster</name>
        <dbReference type="ChEBI" id="CHEBI:49883"/>
        <label>2</label>
        <note>4Fe-4S-S-AdoMet</note>
    </ligand>
</feature>
<feature type="binding site" evidence="1">
    <location>
        <position position="98"/>
    </location>
    <ligand>
        <name>[4Fe-4S] cluster</name>
        <dbReference type="ChEBI" id="CHEBI:49883"/>
        <label>2</label>
        <note>4Fe-4S-S-AdoMet</note>
    </ligand>
</feature>
<feature type="binding site" evidence="1">
    <location>
        <position position="101"/>
    </location>
    <ligand>
        <name>[4Fe-4S] cluster</name>
        <dbReference type="ChEBI" id="CHEBI:49883"/>
        <label>2</label>
        <note>4Fe-4S-S-AdoMet</note>
    </ligand>
</feature>
<feature type="binding site" evidence="1">
    <location>
        <position position="308"/>
    </location>
    <ligand>
        <name>[4Fe-4S] cluster</name>
        <dbReference type="ChEBI" id="CHEBI:49883"/>
        <label>1</label>
    </ligand>
</feature>
<feature type="sequence conflict" description="In Ref. 2; AAO69837." evidence="3" ref="2">
    <original>C</original>
    <variation>F</variation>
    <location>
        <position position="304"/>
    </location>
</feature>
<accession>Q8Z8I3</accession>
<organism>
    <name type="scientific">Salmonella typhi</name>
    <dbReference type="NCBI Taxonomy" id="90370"/>
    <lineage>
        <taxon>Bacteria</taxon>
        <taxon>Pseudomonadati</taxon>
        <taxon>Pseudomonadota</taxon>
        <taxon>Gammaproteobacteria</taxon>
        <taxon>Enterobacterales</taxon>
        <taxon>Enterobacteriaceae</taxon>
        <taxon>Salmonella</taxon>
    </lineage>
</organism>
<proteinExistence type="inferred from homology"/>